<dbReference type="EC" id="6.1.1.3" evidence="1"/>
<dbReference type="EMBL" id="CP001581">
    <property type="protein sequence ID" value="ACO84412.1"/>
    <property type="molecule type" value="Genomic_DNA"/>
</dbReference>
<dbReference type="RefSeq" id="WP_012704212.1">
    <property type="nucleotide sequence ID" value="NC_012563.1"/>
</dbReference>
<dbReference type="SMR" id="C1FKN0"/>
<dbReference type="KEGG" id="cby:CLM_3546"/>
<dbReference type="eggNOG" id="COG0441">
    <property type="taxonomic scope" value="Bacteria"/>
</dbReference>
<dbReference type="HOGENOM" id="CLU_008554_0_1_9"/>
<dbReference type="Proteomes" id="UP000001374">
    <property type="component" value="Chromosome"/>
</dbReference>
<dbReference type="GO" id="GO:0005737">
    <property type="term" value="C:cytoplasm"/>
    <property type="evidence" value="ECO:0007669"/>
    <property type="project" value="UniProtKB-SubCell"/>
</dbReference>
<dbReference type="GO" id="GO:0005524">
    <property type="term" value="F:ATP binding"/>
    <property type="evidence" value="ECO:0007669"/>
    <property type="project" value="UniProtKB-UniRule"/>
</dbReference>
<dbReference type="GO" id="GO:0140096">
    <property type="term" value="F:catalytic activity, acting on a protein"/>
    <property type="evidence" value="ECO:0007669"/>
    <property type="project" value="UniProtKB-ARBA"/>
</dbReference>
<dbReference type="GO" id="GO:0046872">
    <property type="term" value="F:metal ion binding"/>
    <property type="evidence" value="ECO:0007669"/>
    <property type="project" value="UniProtKB-KW"/>
</dbReference>
<dbReference type="GO" id="GO:0004829">
    <property type="term" value="F:threonine-tRNA ligase activity"/>
    <property type="evidence" value="ECO:0007669"/>
    <property type="project" value="UniProtKB-UniRule"/>
</dbReference>
<dbReference type="GO" id="GO:0016740">
    <property type="term" value="F:transferase activity"/>
    <property type="evidence" value="ECO:0007669"/>
    <property type="project" value="UniProtKB-ARBA"/>
</dbReference>
<dbReference type="GO" id="GO:0000049">
    <property type="term" value="F:tRNA binding"/>
    <property type="evidence" value="ECO:0007669"/>
    <property type="project" value="UniProtKB-KW"/>
</dbReference>
<dbReference type="GO" id="GO:0006435">
    <property type="term" value="P:threonyl-tRNA aminoacylation"/>
    <property type="evidence" value="ECO:0007669"/>
    <property type="project" value="UniProtKB-UniRule"/>
</dbReference>
<dbReference type="CDD" id="cd01667">
    <property type="entry name" value="TGS_ThrRS"/>
    <property type="match status" value="1"/>
</dbReference>
<dbReference type="CDD" id="cd00860">
    <property type="entry name" value="ThrRS_anticodon"/>
    <property type="match status" value="1"/>
</dbReference>
<dbReference type="CDD" id="cd00771">
    <property type="entry name" value="ThrRS_core"/>
    <property type="match status" value="1"/>
</dbReference>
<dbReference type="FunFam" id="3.10.20.30:FF:000005">
    <property type="entry name" value="Threonine--tRNA ligase"/>
    <property type="match status" value="1"/>
</dbReference>
<dbReference type="FunFam" id="3.30.54.20:FF:000002">
    <property type="entry name" value="Threonine--tRNA ligase"/>
    <property type="match status" value="1"/>
</dbReference>
<dbReference type="FunFam" id="3.30.930.10:FF:000002">
    <property type="entry name" value="Threonine--tRNA ligase"/>
    <property type="match status" value="1"/>
</dbReference>
<dbReference type="FunFam" id="3.40.50.800:FF:000001">
    <property type="entry name" value="Threonine--tRNA ligase"/>
    <property type="match status" value="1"/>
</dbReference>
<dbReference type="FunFam" id="3.30.980.10:FF:000005">
    <property type="entry name" value="Threonyl-tRNA synthetase, mitochondrial"/>
    <property type="match status" value="1"/>
</dbReference>
<dbReference type="Gene3D" id="3.10.20.30">
    <property type="match status" value="1"/>
</dbReference>
<dbReference type="Gene3D" id="3.30.54.20">
    <property type="match status" value="1"/>
</dbReference>
<dbReference type="Gene3D" id="3.40.50.800">
    <property type="entry name" value="Anticodon-binding domain"/>
    <property type="match status" value="1"/>
</dbReference>
<dbReference type="Gene3D" id="3.30.930.10">
    <property type="entry name" value="Bira Bifunctional Protein, Domain 2"/>
    <property type="match status" value="1"/>
</dbReference>
<dbReference type="Gene3D" id="3.30.980.10">
    <property type="entry name" value="Threonyl-trna Synthetase, Chain A, domain 2"/>
    <property type="match status" value="1"/>
</dbReference>
<dbReference type="HAMAP" id="MF_00184">
    <property type="entry name" value="Thr_tRNA_synth"/>
    <property type="match status" value="1"/>
</dbReference>
<dbReference type="InterPro" id="IPR002314">
    <property type="entry name" value="aa-tRNA-synt_IIb"/>
</dbReference>
<dbReference type="InterPro" id="IPR006195">
    <property type="entry name" value="aa-tRNA-synth_II"/>
</dbReference>
<dbReference type="InterPro" id="IPR045864">
    <property type="entry name" value="aa-tRNA-synth_II/BPL/LPL"/>
</dbReference>
<dbReference type="InterPro" id="IPR004154">
    <property type="entry name" value="Anticodon-bd"/>
</dbReference>
<dbReference type="InterPro" id="IPR036621">
    <property type="entry name" value="Anticodon-bd_dom_sf"/>
</dbReference>
<dbReference type="InterPro" id="IPR012675">
    <property type="entry name" value="Beta-grasp_dom_sf"/>
</dbReference>
<dbReference type="InterPro" id="IPR004095">
    <property type="entry name" value="TGS"/>
</dbReference>
<dbReference type="InterPro" id="IPR012676">
    <property type="entry name" value="TGS-like"/>
</dbReference>
<dbReference type="InterPro" id="IPR002320">
    <property type="entry name" value="Thr-tRNA-ligase_IIa"/>
</dbReference>
<dbReference type="InterPro" id="IPR018163">
    <property type="entry name" value="Thr/Ala-tRNA-synth_IIc_edit"/>
</dbReference>
<dbReference type="InterPro" id="IPR047246">
    <property type="entry name" value="ThrRS_anticodon"/>
</dbReference>
<dbReference type="InterPro" id="IPR033728">
    <property type="entry name" value="ThrRS_core"/>
</dbReference>
<dbReference type="InterPro" id="IPR012947">
    <property type="entry name" value="tRNA_SAD"/>
</dbReference>
<dbReference type="NCBIfam" id="TIGR00418">
    <property type="entry name" value="thrS"/>
    <property type="match status" value="1"/>
</dbReference>
<dbReference type="PANTHER" id="PTHR11451:SF44">
    <property type="entry name" value="THREONINE--TRNA LIGASE, CHLOROPLASTIC_MITOCHONDRIAL 2"/>
    <property type="match status" value="1"/>
</dbReference>
<dbReference type="PANTHER" id="PTHR11451">
    <property type="entry name" value="THREONINE-TRNA LIGASE"/>
    <property type="match status" value="1"/>
</dbReference>
<dbReference type="Pfam" id="PF03129">
    <property type="entry name" value="HGTP_anticodon"/>
    <property type="match status" value="1"/>
</dbReference>
<dbReference type="Pfam" id="PF02824">
    <property type="entry name" value="TGS"/>
    <property type="match status" value="1"/>
</dbReference>
<dbReference type="Pfam" id="PF00587">
    <property type="entry name" value="tRNA-synt_2b"/>
    <property type="match status" value="1"/>
</dbReference>
<dbReference type="Pfam" id="PF07973">
    <property type="entry name" value="tRNA_SAD"/>
    <property type="match status" value="1"/>
</dbReference>
<dbReference type="PRINTS" id="PR01047">
    <property type="entry name" value="TRNASYNTHTHR"/>
</dbReference>
<dbReference type="SMART" id="SM00863">
    <property type="entry name" value="tRNA_SAD"/>
    <property type="match status" value="1"/>
</dbReference>
<dbReference type="SUPFAM" id="SSF52954">
    <property type="entry name" value="Class II aaRS ABD-related"/>
    <property type="match status" value="1"/>
</dbReference>
<dbReference type="SUPFAM" id="SSF55681">
    <property type="entry name" value="Class II aaRS and biotin synthetases"/>
    <property type="match status" value="1"/>
</dbReference>
<dbReference type="SUPFAM" id="SSF81271">
    <property type="entry name" value="TGS-like"/>
    <property type="match status" value="1"/>
</dbReference>
<dbReference type="SUPFAM" id="SSF55186">
    <property type="entry name" value="ThrRS/AlaRS common domain"/>
    <property type="match status" value="1"/>
</dbReference>
<dbReference type="PROSITE" id="PS50862">
    <property type="entry name" value="AA_TRNA_LIGASE_II"/>
    <property type="match status" value="1"/>
</dbReference>
<dbReference type="PROSITE" id="PS51880">
    <property type="entry name" value="TGS"/>
    <property type="match status" value="1"/>
</dbReference>
<proteinExistence type="inferred from homology"/>
<gene>
    <name evidence="1" type="primary">thrS</name>
    <name type="ordered locus">CLM_3546</name>
</gene>
<protein>
    <recommendedName>
        <fullName evidence="1">Threonine--tRNA ligase</fullName>
        <ecNumber evidence="1">6.1.1.3</ecNumber>
    </recommendedName>
    <alternativeName>
        <fullName evidence="1">Threonyl-tRNA synthetase</fullName>
        <shortName evidence="1">ThrRS</shortName>
    </alternativeName>
</protein>
<sequence>MIKITLKDGKVMEFEEGIKISDIAMKISPALYKKALAAKIDGETVDLMTELHKDSSLEILTFEDEMGKWTLRHTGSHMLAQAVKRLYPEVKLAIGPAIDTGFYYDFEADFTFTPEMLEKIEAEIKKIIKENHKLERFELPREEAIKLMKEKNEDYKVELIEDLPEGEVISFYKQGDFTDLCAGPHVPSTGKVKSVKLLSLAGAYWRGDEKNKMLQRIYGTAFTKKSELDEYLNMIEEAKKRDHRKLGKELDLFSIHEEGPGFPFFHPKGMIVRNILESFWREEHTKAGYQEIRTPLILNEALWHQSGHWDHYKENMYFTNIDDGDYAIKPMNCPGGILVYKNSMHSYRDLPLRLSELGIVHRHELSGALHGLMRVRCFTQDDAHLYMTKEQIKEEIVGIIKLIDKFYKLFGFEYFVELSTRPEDSMGSDEDWEIATNGLREALDSIGKEYRVNEGDGAFYGPKIDFHLKDCIGRTWQCGTIQLDFQMPERFDLSYIGADGEKHRPVMVHRTIYGSVERFIGILIEQYAGAFPTWLAPVQVKLMNITDSQYDYLKKVEEALKENNIRVEIDTRNEKIGYKIREAQLQKVPYMLILGDKEVEAGKVAVRSRKDGDLGAISLEEFIEKIKNEIKNKTN</sequence>
<evidence type="ECO:0000255" key="1">
    <source>
        <dbReference type="HAMAP-Rule" id="MF_00184"/>
    </source>
</evidence>
<evidence type="ECO:0000255" key="2">
    <source>
        <dbReference type="PROSITE-ProRule" id="PRU01228"/>
    </source>
</evidence>
<feature type="chain" id="PRO_1000199537" description="Threonine--tRNA ligase">
    <location>
        <begin position="1"/>
        <end position="635"/>
    </location>
</feature>
<feature type="domain" description="TGS" evidence="2">
    <location>
        <begin position="1"/>
        <end position="61"/>
    </location>
</feature>
<feature type="region of interest" description="Catalytic" evidence="1">
    <location>
        <begin position="242"/>
        <end position="532"/>
    </location>
</feature>
<feature type="binding site" evidence="1">
    <location>
        <position position="333"/>
    </location>
    <ligand>
        <name>Zn(2+)</name>
        <dbReference type="ChEBI" id="CHEBI:29105"/>
    </ligand>
</feature>
<feature type="binding site" evidence="1">
    <location>
        <position position="384"/>
    </location>
    <ligand>
        <name>Zn(2+)</name>
        <dbReference type="ChEBI" id="CHEBI:29105"/>
    </ligand>
</feature>
<feature type="binding site" evidence="1">
    <location>
        <position position="509"/>
    </location>
    <ligand>
        <name>Zn(2+)</name>
        <dbReference type="ChEBI" id="CHEBI:29105"/>
    </ligand>
</feature>
<accession>C1FKN0</accession>
<reference key="1">
    <citation type="submission" date="2008-10" db="EMBL/GenBank/DDBJ databases">
        <title>Genome sequence of Clostridium botulinum A2 Kyoto.</title>
        <authorList>
            <person name="Shrivastava S."/>
            <person name="Brinkac L.M."/>
            <person name="Brown J.L."/>
            <person name="Bruce D."/>
            <person name="Detter C.C."/>
            <person name="Johnson E.A."/>
            <person name="Munk C.A."/>
            <person name="Smith L.A."/>
            <person name="Smith T.J."/>
            <person name="Sutton G."/>
            <person name="Brettin T.S."/>
        </authorList>
    </citation>
    <scope>NUCLEOTIDE SEQUENCE [LARGE SCALE GENOMIC DNA]</scope>
    <source>
        <strain>Kyoto / Type A2</strain>
    </source>
</reference>
<keyword id="KW-0030">Aminoacyl-tRNA synthetase</keyword>
<keyword id="KW-0067">ATP-binding</keyword>
<keyword id="KW-0963">Cytoplasm</keyword>
<keyword id="KW-0436">Ligase</keyword>
<keyword id="KW-0479">Metal-binding</keyword>
<keyword id="KW-0547">Nucleotide-binding</keyword>
<keyword id="KW-0648">Protein biosynthesis</keyword>
<keyword id="KW-0694">RNA-binding</keyword>
<keyword id="KW-0820">tRNA-binding</keyword>
<keyword id="KW-0862">Zinc</keyword>
<name>SYT_CLOBJ</name>
<comment type="function">
    <text evidence="1">Catalyzes the attachment of threonine to tRNA(Thr) in a two-step reaction: L-threonine is first activated by ATP to form Thr-AMP and then transferred to the acceptor end of tRNA(Thr). Also edits incorrectly charged L-seryl-tRNA(Thr).</text>
</comment>
<comment type="catalytic activity">
    <reaction evidence="1">
        <text>tRNA(Thr) + L-threonine + ATP = L-threonyl-tRNA(Thr) + AMP + diphosphate + H(+)</text>
        <dbReference type="Rhea" id="RHEA:24624"/>
        <dbReference type="Rhea" id="RHEA-COMP:9670"/>
        <dbReference type="Rhea" id="RHEA-COMP:9704"/>
        <dbReference type="ChEBI" id="CHEBI:15378"/>
        <dbReference type="ChEBI" id="CHEBI:30616"/>
        <dbReference type="ChEBI" id="CHEBI:33019"/>
        <dbReference type="ChEBI" id="CHEBI:57926"/>
        <dbReference type="ChEBI" id="CHEBI:78442"/>
        <dbReference type="ChEBI" id="CHEBI:78534"/>
        <dbReference type="ChEBI" id="CHEBI:456215"/>
        <dbReference type="EC" id="6.1.1.3"/>
    </reaction>
</comment>
<comment type="cofactor">
    <cofactor evidence="1">
        <name>Zn(2+)</name>
        <dbReference type="ChEBI" id="CHEBI:29105"/>
    </cofactor>
    <text evidence="1">Binds 1 zinc ion per subunit.</text>
</comment>
<comment type="subunit">
    <text evidence="1">Homodimer.</text>
</comment>
<comment type="subcellular location">
    <subcellularLocation>
        <location evidence="1">Cytoplasm</location>
    </subcellularLocation>
</comment>
<comment type="similarity">
    <text evidence="1">Belongs to the class-II aminoacyl-tRNA synthetase family.</text>
</comment>
<organism>
    <name type="scientific">Clostridium botulinum (strain Kyoto / Type A2)</name>
    <dbReference type="NCBI Taxonomy" id="536232"/>
    <lineage>
        <taxon>Bacteria</taxon>
        <taxon>Bacillati</taxon>
        <taxon>Bacillota</taxon>
        <taxon>Clostridia</taxon>
        <taxon>Eubacteriales</taxon>
        <taxon>Clostridiaceae</taxon>
        <taxon>Clostridium</taxon>
    </lineage>
</organism>